<reference key="1">
    <citation type="journal article" date="2004" name="Genome Res.">
        <title>The status, quality, and expansion of the NIH full-length cDNA project: the Mammalian Gene Collection (MGC).</title>
        <authorList>
            <consortium name="The MGC Project Team"/>
        </authorList>
    </citation>
    <scope>NUCLEOTIDE SEQUENCE [LARGE SCALE MRNA] (ISOFORMS 1 AND 2)</scope>
    <source>
        <strain>C57BL/6J</strain>
        <strain>FVB/N</strain>
        <tissue>Embryo</tissue>
        <tissue>Mammary gland</tissue>
        <tissue>Thymus</tissue>
    </source>
</reference>
<reference key="2">
    <citation type="journal article" date="1999" name="Exp. Cell Res.">
        <title>Tex27, a gene containing a zinc-finger domain, is up-regulated during the haploid stages of spermatogenesis.</title>
        <authorList>
            <person name="de Luis O."/>
            <person name="Lopez-Fernandez L.A."/>
            <person name="del Mazo J."/>
        </authorList>
    </citation>
    <scope>NUCLEOTIDE SEQUENCE [MRNA] OF 5-227 (ISOFORM 1)</scope>
    <scope>DEVELOPMENTAL STAGE</scope>
</reference>
<reference key="3">
    <citation type="journal article" date="1996" name="Mamm. Genome">
        <title>Characterization of genes expressed early in mouse spermatogenesis, isolated from a subtractive cDNA library.</title>
        <authorList>
            <person name="Lopez-Fernandez L.A."/>
            <person name="del Mazo J."/>
        </authorList>
    </citation>
    <scope>PRELIMINARY PARTIAL NUCLEOTIDE SEQUENCE [MRNA] (ISOFORM 1)</scope>
    <scope>TISSUE SPECIFICITY</scope>
    <source>
        <tissue>Testis</tissue>
    </source>
</reference>
<organism>
    <name type="scientific">Mus musculus</name>
    <name type="common">Mouse</name>
    <dbReference type="NCBI Taxonomy" id="10090"/>
    <lineage>
        <taxon>Eukaryota</taxon>
        <taxon>Metazoa</taxon>
        <taxon>Chordata</taxon>
        <taxon>Craniata</taxon>
        <taxon>Vertebrata</taxon>
        <taxon>Euteleostomi</taxon>
        <taxon>Mammalia</taxon>
        <taxon>Eutheria</taxon>
        <taxon>Euarchontoglires</taxon>
        <taxon>Glires</taxon>
        <taxon>Rodentia</taxon>
        <taxon>Myomorpha</taxon>
        <taxon>Muroidea</taxon>
        <taxon>Muridae</taxon>
        <taxon>Murinae</taxon>
        <taxon>Mus</taxon>
        <taxon>Mus</taxon>
    </lineage>
</organism>
<proteinExistence type="evidence at transcript level"/>
<dbReference type="EMBL" id="BC024483">
    <property type="protein sequence ID" value="AAH24483.1"/>
    <property type="molecule type" value="mRNA"/>
</dbReference>
<dbReference type="EMBL" id="BC027161">
    <property type="protein sequence ID" value="AAH27161.1"/>
    <property type="status" value="ALT_INIT"/>
    <property type="molecule type" value="mRNA"/>
</dbReference>
<dbReference type="EMBL" id="BC034396">
    <property type="protein sequence ID" value="AAH34396.1"/>
    <property type="molecule type" value="mRNA"/>
</dbReference>
<dbReference type="EMBL" id="BC083124">
    <property type="protein sequence ID" value="AAH83124.1"/>
    <property type="molecule type" value="mRNA"/>
</dbReference>
<dbReference type="EMBL" id="BC100559">
    <property type="protein sequence ID" value="AAI00560.1"/>
    <property type="molecule type" value="mRNA"/>
</dbReference>
<dbReference type="EMBL" id="X80437">
    <property type="status" value="NOT_ANNOTATED_CDS"/>
    <property type="molecule type" value="mRNA"/>
</dbReference>
<dbReference type="CCDS" id="CCDS28598.1">
    <molecule id="Q497H0-2"/>
</dbReference>
<dbReference type="CCDS" id="CCDS89053.1">
    <molecule id="Q497H0-1"/>
</dbReference>
<dbReference type="RefSeq" id="NP_001343194.1">
    <molecule id="Q497H0-1"/>
    <property type="nucleotide sequence ID" value="NM_001356265.1"/>
</dbReference>
<dbReference type="RefSeq" id="NP_683728.1">
    <molecule id="Q497H0-2"/>
    <property type="nucleotide sequence ID" value="NM_148926.3"/>
</dbReference>
<dbReference type="RefSeq" id="XP_006524090.1">
    <property type="nucleotide sequence ID" value="XM_006524027.1"/>
</dbReference>
<dbReference type="SMR" id="Q497H0"/>
<dbReference type="BioGRID" id="204132">
    <property type="interactions" value="1"/>
</dbReference>
<dbReference type="FunCoup" id="Q497H0">
    <property type="interactions" value="92"/>
</dbReference>
<dbReference type="STRING" id="10090.ENSMUSP00000063158"/>
<dbReference type="iPTMnet" id="Q497H0"/>
<dbReference type="PhosphoSitePlus" id="Q497H0"/>
<dbReference type="SwissPalm" id="Q497H0"/>
<dbReference type="PeptideAtlas" id="Q497H0"/>
<dbReference type="ProteomicsDB" id="298515">
    <molecule id="Q497H0-1"/>
</dbReference>
<dbReference type="ProteomicsDB" id="298516">
    <molecule id="Q497H0-2"/>
</dbReference>
<dbReference type="Pumba" id="Q497H0"/>
<dbReference type="Antibodypedia" id="15614">
    <property type="antibodies" value="196 antibodies from 23 providers"/>
</dbReference>
<dbReference type="DNASU" id="21769"/>
<dbReference type="Ensembl" id="ENSMUST00000057897.10">
    <molecule id="Q497H0-2"/>
    <property type="protein sequence ID" value="ENSMUSP00000063158.8"/>
    <property type="gene ID" value="ENSMUSG00000044477.13"/>
</dbReference>
<dbReference type="Ensembl" id="ENSMUST00000226208.3">
    <molecule id="Q497H0-1"/>
    <property type="protein sequence ID" value="ENSMUSP00000154782.2"/>
    <property type="gene ID" value="ENSMUSG00000044477.13"/>
</dbReference>
<dbReference type="GeneID" id="21769"/>
<dbReference type="KEGG" id="mmu:21769"/>
<dbReference type="UCSC" id="uc008btp.1">
    <molecule id="Q497H0-2"/>
    <property type="organism name" value="mouse"/>
</dbReference>
<dbReference type="UCSC" id="uc008btq.1">
    <molecule id="Q497H0-1"/>
    <property type="organism name" value="mouse"/>
</dbReference>
<dbReference type="AGR" id="MGI:1096572"/>
<dbReference type="CTD" id="60685"/>
<dbReference type="MGI" id="MGI:1096572">
    <property type="gene designation" value="Zfand3"/>
</dbReference>
<dbReference type="VEuPathDB" id="HostDB:ENSMUSG00000044477"/>
<dbReference type="GeneTree" id="ENSGT00390000014679"/>
<dbReference type="HOGENOM" id="CLU_102579_0_0_1"/>
<dbReference type="InParanoid" id="Q497H0"/>
<dbReference type="OMA" id="IGRCKCD"/>
<dbReference type="OrthoDB" id="428577at2759"/>
<dbReference type="PhylomeDB" id="Q497H0"/>
<dbReference type="TreeFam" id="TF354281"/>
<dbReference type="BioGRID-ORCS" id="21769">
    <property type="hits" value="2 hits in 76 CRISPR screens"/>
</dbReference>
<dbReference type="ChiTaRS" id="Zfand3">
    <property type="organism name" value="mouse"/>
</dbReference>
<dbReference type="PRO" id="PR:Q497H0"/>
<dbReference type="Proteomes" id="UP000000589">
    <property type="component" value="Chromosome 17"/>
</dbReference>
<dbReference type="RNAct" id="Q497H0">
    <property type="molecule type" value="protein"/>
</dbReference>
<dbReference type="Bgee" id="ENSMUSG00000044477">
    <property type="expression patterns" value="Expressed in seminiferous tubule of testis and 246 other cell types or tissues"/>
</dbReference>
<dbReference type="ExpressionAtlas" id="Q497H0">
    <property type="expression patterns" value="baseline and differential"/>
</dbReference>
<dbReference type="GO" id="GO:0003677">
    <property type="term" value="F:DNA binding"/>
    <property type="evidence" value="ECO:0007669"/>
    <property type="project" value="InterPro"/>
</dbReference>
<dbReference type="GO" id="GO:0008270">
    <property type="term" value="F:zinc ion binding"/>
    <property type="evidence" value="ECO:0007669"/>
    <property type="project" value="UniProtKB-KW"/>
</dbReference>
<dbReference type="FunFam" id="4.10.1110.10:FF:000011">
    <property type="entry name" value="AN1-type zinc finger protein 3"/>
    <property type="match status" value="1"/>
</dbReference>
<dbReference type="Gene3D" id="1.20.5.4770">
    <property type="match status" value="1"/>
</dbReference>
<dbReference type="Gene3D" id="4.10.1110.10">
    <property type="entry name" value="AN1-like Zinc finger"/>
    <property type="match status" value="1"/>
</dbReference>
<dbReference type="InterPro" id="IPR035896">
    <property type="entry name" value="AN1-like_Znf"/>
</dbReference>
<dbReference type="InterPro" id="IPR050652">
    <property type="entry name" value="AN1_A20_ZnFinger"/>
</dbReference>
<dbReference type="InterPro" id="IPR002653">
    <property type="entry name" value="Znf_A20"/>
</dbReference>
<dbReference type="InterPro" id="IPR000058">
    <property type="entry name" value="Znf_AN1"/>
</dbReference>
<dbReference type="PANTHER" id="PTHR10634">
    <property type="entry name" value="AN1-TYPE ZINC FINGER PROTEIN"/>
    <property type="match status" value="1"/>
</dbReference>
<dbReference type="PANTHER" id="PTHR10634:SF67">
    <property type="entry name" value="AN1-TYPE ZINC FINGER PROTEIN 3"/>
    <property type="match status" value="1"/>
</dbReference>
<dbReference type="Pfam" id="PF01754">
    <property type="entry name" value="zf-A20"/>
    <property type="match status" value="1"/>
</dbReference>
<dbReference type="Pfam" id="PF01428">
    <property type="entry name" value="zf-AN1"/>
    <property type="match status" value="1"/>
</dbReference>
<dbReference type="SMART" id="SM00259">
    <property type="entry name" value="ZnF_A20"/>
    <property type="match status" value="1"/>
</dbReference>
<dbReference type="SMART" id="SM00154">
    <property type="entry name" value="ZnF_AN1"/>
    <property type="match status" value="1"/>
</dbReference>
<dbReference type="SUPFAM" id="SSF118310">
    <property type="entry name" value="AN1-like Zinc finger"/>
    <property type="match status" value="1"/>
</dbReference>
<dbReference type="SUPFAM" id="SSF57716">
    <property type="entry name" value="Glucocorticoid receptor-like (DNA-binding domain)"/>
    <property type="match status" value="1"/>
</dbReference>
<dbReference type="PROSITE" id="PS51036">
    <property type="entry name" value="ZF_A20"/>
    <property type="match status" value="1"/>
</dbReference>
<dbReference type="PROSITE" id="PS51039">
    <property type="entry name" value="ZF_AN1"/>
    <property type="match status" value="1"/>
</dbReference>
<name>ZFAN3_MOUSE</name>
<gene>
    <name type="primary">Zfand3</name>
    <name type="synonym">Tex27</name>
</gene>
<evidence type="ECO:0000255" key="1">
    <source>
        <dbReference type="PROSITE-ProRule" id="PRU00449"/>
    </source>
</evidence>
<evidence type="ECO:0000255" key="2">
    <source>
        <dbReference type="PROSITE-ProRule" id="PRU00451"/>
    </source>
</evidence>
<evidence type="ECO:0000256" key="3">
    <source>
        <dbReference type="SAM" id="MobiDB-lite"/>
    </source>
</evidence>
<evidence type="ECO:0000269" key="4">
    <source>
    </source>
</evidence>
<evidence type="ECO:0000269" key="5">
    <source>
    </source>
</evidence>
<evidence type="ECO:0000303" key="6">
    <source>
    </source>
</evidence>
<evidence type="ECO:0000305" key="7"/>
<protein>
    <recommendedName>
        <fullName>AN1-type zinc finger protein 3</fullName>
    </recommendedName>
    <alternativeName>
        <fullName>Testis-expressed protein 27</fullName>
    </alternativeName>
</protein>
<sequence length="227" mass="25081">MGDAGSERSKAPSLPPRCPCGFWGSSKTMNLCSKCFADFQKKQPDDDSTPSTSNSQSDLFSEETTSDNNNTSVTTPTLSPSQQSLPTELNVTSPSTEECGPCTDTAHVSLITPTKRSCGADSQSENEASPVKRPRLVENPERPEESGRSKQKSRRRCFQCQTKLELVQQELGSCRCGYVFCMLHRLPEQHDCTFDHMGRGREEAIMKMVKLDRKVGRSCQRIGEGCS</sequence>
<accession>Q497H0</accession>
<accession>Q8K230</accession>
<accession>Q8R2V7</accession>
<accession>Q8R3V1</accession>
<feature type="chain" id="PRO_0000076371" description="AN1-type zinc finger protein 3">
    <location>
        <begin position="1"/>
        <end position="227"/>
    </location>
</feature>
<feature type="zinc finger region" description="A20-type" evidence="2">
    <location>
        <begin position="12"/>
        <end position="44"/>
    </location>
</feature>
<feature type="zinc finger region" description="AN1-type" evidence="1">
    <location>
        <begin position="151"/>
        <end position="200"/>
    </location>
</feature>
<feature type="region of interest" description="Disordered" evidence="3">
    <location>
        <begin position="41"/>
        <end position="99"/>
    </location>
</feature>
<feature type="region of interest" description="Disordered" evidence="3">
    <location>
        <begin position="113"/>
        <end position="151"/>
    </location>
</feature>
<feature type="compositionally biased region" description="Low complexity" evidence="3">
    <location>
        <begin position="49"/>
        <end position="59"/>
    </location>
</feature>
<feature type="compositionally biased region" description="Low complexity" evidence="3">
    <location>
        <begin position="66"/>
        <end position="77"/>
    </location>
</feature>
<feature type="compositionally biased region" description="Polar residues" evidence="3">
    <location>
        <begin position="78"/>
        <end position="96"/>
    </location>
</feature>
<feature type="compositionally biased region" description="Polar residues" evidence="3">
    <location>
        <begin position="113"/>
        <end position="127"/>
    </location>
</feature>
<feature type="compositionally biased region" description="Basic and acidic residues" evidence="3">
    <location>
        <begin position="135"/>
        <end position="148"/>
    </location>
</feature>
<feature type="binding site" evidence="2">
    <location>
        <position position="18"/>
    </location>
    <ligand>
        <name>Zn(2+)</name>
        <dbReference type="ChEBI" id="CHEBI:29105"/>
        <label>1</label>
    </ligand>
</feature>
<feature type="binding site" evidence="2">
    <location>
        <position position="20"/>
    </location>
    <ligand>
        <name>Zn(2+)</name>
        <dbReference type="ChEBI" id="CHEBI:29105"/>
        <label>1</label>
    </ligand>
</feature>
<feature type="binding site" evidence="2">
    <location>
        <position position="32"/>
    </location>
    <ligand>
        <name>Zn(2+)</name>
        <dbReference type="ChEBI" id="CHEBI:29105"/>
        <label>1</label>
    </ligand>
</feature>
<feature type="binding site" evidence="2">
    <location>
        <position position="35"/>
    </location>
    <ligand>
        <name>Zn(2+)</name>
        <dbReference type="ChEBI" id="CHEBI:29105"/>
        <label>1</label>
    </ligand>
</feature>
<feature type="binding site" evidence="1">
    <location>
        <position position="157"/>
    </location>
    <ligand>
        <name>Zn(2+)</name>
        <dbReference type="ChEBI" id="CHEBI:29105"/>
        <label>2</label>
    </ligand>
</feature>
<feature type="binding site" evidence="1">
    <location>
        <position position="160"/>
    </location>
    <ligand>
        <name>Zn(2+)</name>
        <dbReference type="ChEBI" id="CHEBI:29105"/>
        <label>2</label>
    </ligand>
</feature>
<feature type="binding site" evidence="1">
    <location>
        <position position="174"/>
    </location>
    <ligand>
        <name>Zn(2+)</name>
        <dbReference type="ChEBI" id="CHEBI:29105"/>
        <label>3</label>
    </ligand>
</feature>
<feature type="binding site" evidence="1">
    <location>
        <position position="176"/>
    </location>
    <ligand>
        <name>Zn(2+)</name>
        <dbReference type="ChEBI" id="CHEBI:29105"/>
        <label>3</label>
    </ligand>
</feature>
<feature type="binding site" evidence="1">
    <location>
        <position position="181"/>
    </location>
    <ligand>
        <name>Zn(2+)</name>
        <dbReference type="ChEBI" id="CHEBI:29105"/>
        <label>2</label>
    </ligand>
</feature>
<feature type="binding site" evidence="1">
    <location>
        <position position="184"/>
    </location>
    <ligand>
        <name>Zn(2+)</name>
        <dbReference type="ChEBI" id="CHEBI:29105"/>
        <label>2</label>
    </ligand>
</feature>
<feature type="binding site" evidence="1">
    <location>
        <position position="190"/>
    </location>
    <ligand>
        <name>Zn(2+)</name>
        <dbReference type="ChEBI" id="CHEBI:29105"/>
        <label>3</label>
    </ligand>
</feature>
<feature type="binding site" evidence="1">
    <location>
        <position position="192"/>
    </location>
    <ligand>
        <name>Zn(2+)</name>
        <dbReference type="ChEBI" id="CHEBI:29105"/>
        <label>3</label>
    </ligand>
</feature>
<feature type="splice variant" id="VSP_017154" description="In isoform 2." evidence="6">
    <original>CGPCTDTAHVSLITPTKRSCGAD</original>
    <variation>Y</variation>
    <location>
        <begin position="99"/>
        <end position="121"/>
    </location>
</feature>
<keyword id="KW-0025">Alternative splicing</keyword>
<keyword id="KW-0479">Metal-binding</keyword>
<keyword id="KW-1185">Reference proteome</keyword>
<keyword id="KW-0862">Zinc</keyword>
<keyword id="KW-0863">Zinc-finger</keyword>
<comment type="alternative products">
    <event type="alternative splicing"/>
    <isoform>
        <id>Q497H0-1</id>
        <name>1</name>
        <sequence type="displayed"/>
    </isoform>
    <isoform>
        <id>Q497H0-2</id>
        <name>2</name>
        <sequence type="described" ref="VSP_017154"/>
    </isoform>
</comment>
<comment type="tissue specificity">
    <text evidence="5">Expressed in testis.</text>
</comment>
<comment type="developmental stage">
    <text evidence="4">Preferentially expressed during the haploid stages of spermatogenesis.</text>
</comment>
<comment type="sequence caution" evidence="7">
    <conflict type="erroneous initiation">
        <sequence resource="EMBL-CDS" id="AAH27161"/>
    </conflict>
</comment>